<feature type="chain" id="PRO_0000301931" description="3-hydroxyacyl-[acyl-carrier-protein] dehydratase FabZ">
    <location>
        <begin position="1"/>
        <end position="146"/>
    </location>
</feature>
<feature type="active site" evidence="1">
    <location>
        <position position="51"/>
    </location>
</feature>
<gene>
    <name evidence="1" type="primary">fabZ</name>
    <name type="ordered locus">SAOUHSC_02336</name>
</gene>
<organism>
    <name type="scientific">Staphylococcus aureus (strain NCTC 8325 / PS 47)</name>
    <dbReference type="NCBI Taxonomy" id="93061"/>
    <lineage>
        <taxon>Bacteria</taxon>
        <taxon>Bacillati</taxon>
        <taxon>Bacillota</taxon>
        <taxon>Bacilli</taxon>
        <taxon>Bacillales</taxon>
        <taxon>Staphylococcaceae</taxon>
        <taxon>Staphylococcus</taxon>
    </lineage>
</organism>
<evidence type="ECO:0000255" key="1">
    <source>
        <dbReference type="HAMAP-Rule" id="MF_00406"/>
    </source>
</evidence>
<protein>
    <recommendedName>
        <fullName evidence="1">3-hydroxyacyl-[acyl-carrier-protein] dehydratase FabZ</fullName>
        <ecNumber evidence="1">4.2.1.59</ecNumber>
    </recommendedName>
    <alternativeName>
        <fullName evidence="1">(3R)-hydroxymyristoyl-[acyl-carrier-protein] dehydratase</fullName>
        <shortName evidence="1">(3R)-hydroxymyristoyl-ACP dehydrase</shortName>
    </alternativeName>
    <alternativeName>
        <fullName evidence="1">Beta-hydroxyacyl-ACP dehydratase</fullName>
    </alternativeName>
</protein>
<keyword id="KW-0963">Cytoplasm</keyword>
<keyword id="KW-0441">Lipid A biosynthesis</keyword>
<keyword id="KW-0444">Lipid biosynthesis</keyword>
<keyword id="KW-0443">Lipid metabolism</keyword>
<keyword id="KW-0456">Lyase</keyword>
<keyword id="KW-1185">Reference proteome</keyword>
<proteinExistence type="inferred from homology"/>
<reference key="1">
    <citation type="book" date="2006" name="Gram positive pathogens, 2nd edition">
        <title>The Staphylococcus aureus NCTC 8325 genome.</title>
        <editorList>
            <person name="Fischetti V."/>
            <person name="Novick R."/>
            <person name="Ferretti J."/>
            <person name="Portnoy D."/>
            <person name="Rood J."/>
        </editorList>
        <authorList>
            <person name="Gillaspy A.F."/>
            <person name="Worrell V."/>
            <person name="Orvis J."/>
            <person name="Roe B.A."/>
            <person name="Dyer D.W."/>
            <person name="Iandolo J.J."/>
        </authorList>
    </citation>
    <scope>NUCLEOTIDE SEQUENCE [LARGE SCALE GENOMIC DNA]</scope>
    <source>
        <strain>NCTC 8325 / PS 47</strain>
    </source>
</reference>
<accession>Q2FWF5</accession>
<dbReference type="EC" id="4.2.1.59" evidence="1"/>
<dbReference type="EMBL" id="CP000253">
    <property type="protein sequence ID" value="ABD31370.1"/>
    <property type="molecule type" value="Genomic_DNA"/>
</dbReference>
<dbReference type="RefSeq" id="WP_000447678.1">
    <property type="nucleotide sequence ID" value="NZ_LS483365.1"/>
</dbReference>
<dbReference type="RefSeq" id="YP_500815.1">
    <property type="nucleotide sequence ID" value="NC_007795.1"/>
</dbReference>
<dbReference type="SMR" id="Q2FWF5"/>
<dbReference type="STRING" id="93061.SAOUHSC_02336"/>
<dbReference type="PaxDb" id="1280-SAXN108_2344"/>
<dbReference type="GeneID" id="3920961"/>
<dbReference type="KEGG" id="sao:SAOUHSC_02336"/>
<dbReference type="PATRIC" id="fig|93061.5.peg.2117"/>
<dbReference type="eggNOG" id="COG0764">
    <property type="taxonomic scope" value="Bacteria"/>
</dbReference>
<dbReference type="HOGENOM" id="CLU_078912_3_0_9"/>
<dbReference type="OrthoDB" id="9772788at2"/>
<dbReference type="PRO" id="PR:Q2FWF5"/>
<dbReference type="Proteomes" id="UP000008816">
    <property type="component" value="Chromosome"/>
</dbReference>
<dbReference type="GO" id="GO:0005737">
    <property type="term" value="C:cytoplasm"/>
    <property type="evidence" value="ECO:0007669"/>
    <property type="project" value="UniProtKB-SubCell"/>
</dbReference>
<dbReference type="GO" id="GO:0016020">
    <property type="term" value="C:membrane"/>
    <property type="evidence" value="ECO:0007669"/>
    <property type="project" value="GOC"/>
</dbReference>
<dbReference type="GO" id="GO:0019171">
    <property type="term" value="F:(3R)-hydroxyacyl-[acyl-carrier-protein] dehydratase activity"/>
    <property type="evidence" value="ECO:0007669"/>
    <property type="project" value="UniProtKB-EC"/>
</dbReference>
<dbReference type="GO" id="GO:0006633">
    <property type="term" value="P:fatty acid biosynthetic process"/>
    <property type="evidence" value="ECO:0007669"/>
    <property type="project" value="UniProtKB-UniRule"/>
</dbReference>
<dbReference type="GO" id="GO:0009245">
    <property type="term" value="P:lipid A biosynthetic process"/>
    <property type="evidence" value="ECO:0007669"/>
    <property type="project" value="UniProtKB-UniRule"/>
</dbReference>
<dbReference type="CDD" id="cd01288">
    <property type="entry name" value="FabZ"/>
    <property type="match status" value="1"/>
</dbReference>
<dbReference type="FunFam" id="3.10.129.10:FF:000001">
    <property type="entry name" value="3-hydroxyacyl-[acyl-carrier-protein] dehydratase FabZ"/>
    <property type="match status" value="1"/>
</dbReference>
<dbReference type="Gene3D" id="3.10.129.10">
    <property type="entry name" value="Hotdog Thioesterase"/>
    <property type="match status" value="1"/>
</dbReference>
<dbReference type="HAMAP" id="MF_00406">
    <property type="entry name" value="FabZ"/>
    <property type="match status" value="1"/>
</dbReference>
<dbReference type="InterPro" id="IPR013114">
    <property type="entry name" value="FabA_FabZ"/>
</dbReference>
<dbReference type="InterPro" id="IPR010084">
    <property type="entry name" value="FabZ"/>
</dbReference>
<dbReference type="InterPro" id="IPR029069">
    <property type="entry name" value="HotDog_dom_sf"/>
</dbReference>
<dbReference type="NCBIfam" id="TIGR01750">
    <property type="entry name" value="fabZ"/>
    <property type="match status" value="1"/>
</dbReference>
<dbReference type="NCBIfam" id="NF000582">
    <property type="entry name" value="PRK00006.1"/>
    <property type="match status" value="1"/>
</dbReference>
<dbReference type="PANTHER" id="PTHR30272">
    <property type="entry name" value="3-HYDROXYACYL-[ACYL-CARRIER-PROTEIN] DEHYDRATASE"/>
    <property type="match status" value="1"/>
</dbReference>
<dbReference type="PANTHER" id="PTHR30272:SF1">
    <property type="entry name" value="3-HYDROXYACYL-[ACYL-CARRIER-PROTEIN] DEHYDRATASE"/>
    <property type="match status" value="1"/>
</dbReference>
<dbReference type="Pfam" id="PF07977">
    <property type="entry name" value="FabA"/>
    <property type="match status" value="1"/>
</dbReference>
<dbReference type="SUPFAM" id="SSF54637">
    <property type="entry name" value="Thioesterase/thiol ester dehydrase-isomerase"/>
    <property type="match status" value="1"/>
</dbReference>
<sequence length="146" mass="16082">METIFDYNQIKQIIPHRQPFLLIDKVVEYEEGQRCVAIKQVSGNEPFFQGHFPEYAVMPGVLITEALAQTGAVAILNSEENKGKIALFAGIDKCRFKRQVVPGDTLTLEVEITKIKGPIGKGNAKATVDGQLACSCELTFAIQDVK</sequence>
<name>FABZ_STAA8</name>
<comment type="function">
    <text evidence="1">Involved in unsaturated fatty acids biosynthesis. Catalyzes the dehydration of short chain beta-hydroxyacyl-ACPs and long chain saturated and unsaturated beta-hydroxyacyl-ACPs.</text>
</comment>
<comment type="catalytic activity">
    <reaction evidence="1">
        <text>a (3R)-hydroxyacyl-[ACP] = a (2E)-enoyl-[ACP] + H2O</text>
        <dbReference type="Rhea" id="RHEA:13097"/>
        <dbReference type="Rhea" id="RHEA-COMP:9925"/>
        <dbReference type="Rhea" id="RHEA-COMP:9945"/>
        <dbReference type="ChEBI" id="CHEBI:15377"/>
        <dbReference type="ChEBI" id="CHEBI:78784"/>
        <dbReference type="ChEBI" id="CHEBI:78827"/>
        <dbReference type="EC" id="4.2.1.59"/>
    </reaction>
</comment>
<comment type="subcellular location">
    <subcellularLocation>
        <location evidence="1">Cytoplasm</location>
    </subcellularLocation>
</comment>
<comment type="similarity">
    <text evidence="1">Belongs to the thioester dehydratase family. FabZ subfamily.</text>
</comment>